<name>FAL1_CRYNB</name>
<organism>
    <name type="scientific">Cryptococcus neoformans var. neoformans serotype D (strain B-3501A)</name>
    <name type="common">Filobasidiella neoformans</name>
    <dbReference type="NCBI Taxonomy" id="283643"/>
    <lineage>
        <taxon>Eukaryota</taxon>
        <taxon>Fungi</taxon>
        <taxon>Dikarya</taxon>
        <taxon>Basidiomycota</taxon>
        <taxon>Agaricomycotina</taxon>
        <taxon>Tremellomycetes</taxon>
        <taxon>Tremellales</taxon>
        <taxon>Cryptococcaceae</taxon>
        <taxon>Cryptococcus</taxon>
        <taxon>Cryptococcus neoformans species complex</taxon>
    </lineage>
</organism>
<accession>P0CQ73</accession>
<accession>Q55WQ4</accession>
<accession>Q5KJJ2</accession>
<gene>
    <name type="primary">FAL1</name>
    <name type="ordered locus">CNBC0850</name>
</gene>
<keyword id="KW-0067">ATP-binding</keyword>
<keyword id="KW-0347">Helicase</keyword>
<keyword id="KW-0378">Hydrolase</keyword>
<keyword id="KW-0547">Nucleotide-binding</keyword>
<keyword id="KW-0539">Nucleus</keyword>
<keyword id="KW-0690">Ribosome biogenesis</keyword>
<keyword id="KW-0694">RNA-binding</keyword>
<keyword id="KW-0698">rRNA processing</keyword>
<protein>
    <recommendedName>
        <fullName>ATP-dependent RNA helicase FAL1</fullName>
        <ecNumber>3.6.4.13</ecNumber>
    </recommendedName>
</protein>
<feature type="chain" id="PRO_0000410247" description="ATP-dependent RNA helicase FAL1">
    <location>
        <begin position="1"/>
        <end position="396"/>
    </location>
</feature>
<feature type="domain" description="Helicase ATP-binding" evidence="2">
    <location>
        <begin position="54"/>
        <end position="224"/>
    </location>
</feature>
<feature type="domain" description="Helicase C-terminal" evidence="3">
    <location>
        <begin position="235"/>
        <end position="396"/>
    </location>
</feature>
<feature type="short sequence motif" description="Q motif">
    <location>
        <begin position="23"/>
        <end position="51"/>
    </location>
</feature>
<feature type="short sequence motif" description="DEAD box">
    <location>
        <begin position="172"/>
        <end position="175"/>
    </location>
</feature>
<feature type="binding site" evidence="2">
    <location>
        <begin position="67"/>
        <end position="74"/>
    </location>
    <ligand>
        <name>ATP</name>
        <dbReference type="ChEBI" id="CHEBI:30616"/>
    </ligand>
</feature>
<sequence length="396" mass="44736">MAGVNVGDDKLVFESSEAVTVAPTFEALNLKEDLLRGIYAYNFEKPSAIQQRAIIPIIRGRDVIAQAQSGTGKTATFSISMLQSIDTNLRETQALVLSPTRELAVQIQTVVLALGDYMNVSCHACIGGTSVGEDIRKLEAGQQVVSGTPGRVFDMIRRRNLRTKDIKMLILDESDELLNKGFKDQIYDIYRYLPPATQVVVVSATLPHDVLEMTTKFMTDPVRILVKRDELTLEGIKQFFVAVEKEDWKFDTLCDLYDTLTITQAVIFCNTRRKVDWLTEKMREANFTVSSMHGEMVQKERDAIMAEFRGGQSRVLITTDVWARGIDVQQVSLVINYDLPTSRENYLHRIGRSGRFGRKGVAINFVTVDDVRILRDIEQYYSTQIDEMPMNVAELT</sequence>
<evidence type="ECO:0000250" key="1"/>
<evidence type="ECO:0000255" key="2">
    <source>
        <dbReference type="PROSITE-ProRule" id="PRU00541"/>
    </source>
</evidence>
<evidence type="ECO:0000255" key="3">
    <source>
        <dbReference type="PROSITE-ProRule" id="PRU00542"/>
    </source>
</evidence>
<evidence type="ECO:0000305" key="4"/>
<comment type="function">
    <text evidence="1">ATP-dependent RNA helicase involved in 40S ribosomal subunit biogenesis. Required for the processing and cleavage of 35S pre-rRNA at sites A0, A1, and A2, leading to mature 18S rRNA (By similarity).</text>
</comment>
<comment type="catalytic activity">
    <reaction>
        <text>ATP + H2O = ADP + phosphate + H(+)</text>
        <dbReference type="Rhea" id="RHEA:13065"/>
        <dbReference type="ChEBI" id="CHEBI:15377"/>
        <dbReference type="ChEBI" id="CHEBI:15378"/>
        <dbReference type="ChEBI" id="CHEBI:30616"/>
        <dbReference type="ChEBI" id="CHEBI:43474"/>
        <dbReference type="ChEBI" id="CHEBI:456216"/>
        <dbReference type="EC" id="3.6.4.13"/>
    </reaction>
</comment>
<comment type="subcellular location">
    <subcellularLocation>
        <location evidence="1">Nucleus</location>
        <location evidence="1">Nucleolus</location>
    </subcellularLocation>
</comment>
<comment type="domain">
    <text>The Q motif is unique to and characteristic of the DEAD box family of RNA helicases and controls ATP binding and hydrolysis.</text>
</comment>
<comment type="similarity">
    <text evidence="4">Belongs to the DEAD box helicase family. DDX48/FAL1 subfamily.</text>
</comment>
<reference key="1">
    <citation type="journal article" date="2005" name="Science">
        <title>The genome of the basidiomycetous yeast and human pathogen Cryptococcus neoformans.</title>
        <authorList>
            <person name="Loftus B.J."/>
            <person name="Fung E."/>
            <person name="Roncaglia P."/>
            <person name="Rowley D."/>
            <person name="Amedeo P."/>
            <person name="Bruno D."/>
            <person name="Vamathevan J."/>
            <person name="Miranda M."/>
            <person name="Anderson I.J."/>
            <person name="Fraser J.A."/>
            <person name="Allen J.E."/>
            <person name="Bosdet I.E."/>
            <person name="Brent M.R."/>
            <person name="Chiu R."/>
            <person name="Doering T.L."/>
            <person name="Donlin M.J."/>
            <person name="D'Souza C.A."/>
            <person name="Fox D.S."/>
            <person name="Grinberg V."/>
            <person name="Fu J."/>
            <person name="Fukushima M."/>
            <person name="Haas B.J."/>
            <person name="Huang J.C."/>
            <person name="Janbon G."/>
            <person name="Jones S.J.M."/>
            <person name="Koo H.L."/>
            <person name="Krzywinski M.I."/>
            <person name="Kwon-Chung K.J."/>
            <person name="Lengeler K.B."/>
            <person name="Maiti R."/>
            <person name="Marra M.A."/>
            <person name="Marra R.E."/>
            <person name="Mathewson C.A."/>
            <person name="Mitchell T.G."/>
            <person name="Pertea M."/>
            <person name="Riggs F.R."/>
            <person name="Salzberg S.L."/>
            <person name="Schein J.E."/>
            <person name="Shvartsbeyn A."/>
            <person name="Shin H."/>
            <person name="Shumway M."/>
            <person name="Specht C.A."/>
            <person name="Suh B.B."/>
            <person name="Tenney A."/>
            <person name="Utterback T.R."/>
            <person name="Wickes B.L."/>
            <person name="Wortman J.R."/>
            <person name="Wye N.H."/>
            <person name="Kronstad J.W."/>
            <person name="Lodge J.K."/>
            <person name="Heitman J."/>
            <person name="Davis R.W."/>
            <person name="Fraser C.M."/>
            <person name="Hyman R.W."/>
        </authorList>
    </citation>
    <scope>NUCLEOTIDE SEQUENCE [LARGE SCALE GENOMIC DNA]</scope>
    <source>
        <strain>B-3501A</strain>
    </source>
</reference>
<proteinExistence type="inferred from homology"/>
<dbReference type="EC" id="3.6.4.13"/>
<dbReference type="EMBL" id="AAEY01000013">
    <property type="protein sequence ID" value="EAL21945.1"/>
    <property type="molecule type" value="Genomic_DNA"/>
</dbReference>
<dbReference type="RefSeq" id="XP_776592.1">
    <property type="nucleotide sequence ID" value="XM_771499.1"/>
</dbReference>
<dbReference type="SMR" id="P0CQ73"/>
<dbReference type="EnsemblFungi" id="AAW42586">
    <property type="protein sequence ID" value="AAW42586"/>
    <property type="gene ID" value="CNC06360"/>
</dbReference>
<dbReference type="GeneID" id="4934749"/>
<dbReference type="KEGG" id="cnb:CNBC0850"/>
<dbReference type="VEuPathDB" id="FungiDB:CNBC0850"/>
<dbReference type="HOGENOM" id="CLU_003041_1_0_1"/>
<dbReference type="OrthoDB" id="2363at5206"/>
<dbReference type="GO" id="GO:0005730">
    <property type="term" value="C:nucleolus"/>
    <property type="evidence" value="ECO:0007669"/>
    <property type="project" value="UniProtKB-SubCell"/>
</dbReference>
<dbReference type="GO" id="GO:0005524">
    <property type="term" value="F:ATP binding"/>
    <property type="evidence" value="ECO:0007669"/>
    <property type="project" value="UniProtKB-KW"/>
</dbReference>
<dbReference type="GO" id="GO:0016887">
    <property type="term" value="F:ATP hydrolysis activity"/>
    <property type="evidence" value="ECO:0007669"/>
    <property type="project" value="RHEA"/>
</dbReference>
<dbReference type="GO" id="GO:0003723">
    <property type="term" value="F:RNA binding"/>
    <property type="evidence" value="ECO:0007669"/>
    <property type="project" value="UniProtKB-KW"/>
</dbReference>
<dbReference type="GO" id="GO:0003724">
    <property type="term" value="F:RNA helicase activity"/>
    <property type="evidence" value="ECO:0007669"/>
    <property type="project" value="UniProtKB-EC"/>
</dbReference>
<dbReference type="GO" id="GO:0006364">
    <property type="term" value="P:rRNA processing"/>
    <property type="evidence" value="ECO:0007669"/>
    <property type="project" value="UniProtKB-KW"/>
</dbReference>
<dbReference type="CDD" id="cd18045">
    <property type="entry name" value="DEADc_EIF4AIII_DDX48"/>
    <property type="match status" value="1"/>
</dbReference>
<dbReference type="CDD" id="cd18787">
    <property type="entry name" value="SF2_C_DEAD"/>
    <property type="match status" value="1"/>
</dbReference>
<dbReference type="FunFam" id="3.40.50.300:FF:000031">
    <property type="entry name" value="Eukaryotic initiation factor 4A-III"/>
    <property type="match status" value="1"/>
</dbReference>
<dbReference type="FunFam" id="3.40.50.300:FF:000498">
    <property type="entry name" value="Eukaryotic initiation factor 4A-III"/>
    <property type="match status" value="1"/>
</dbReference>
<dbReference type="Gene3D" id="3.40.50.300">
    <property type="entry name" value="P-loop containing nucleotide triphosphate hydrolases"/>
    <property type="match status" value="2"/>
</dbReference>
<dbReference type="InterPro" id="IPR011545">
    <property type="entry name" value="DEAD/DEAH_box_helicase_dom"/>
</dbReference>
<dbReference type="InterPro" id="IPR014001">
    <property type="entry name" value="Helicase_ATP-bd"/>
</dbReference>
<dbReference type="InterPro" id="IPR001650">
    <property type="entry name" value="Helicase_C-like"/>
</dbReference>
<dbReference type="InterPro" id="IPR027417">
    <property type="entry name" value="P-loop_NTPase"/>
</dbReference>
<dbReference type="InterPro" id="IPR014014">
    <property type="entry name" value="RNA_helicase_DEAD_Q_motif"/>
</dbReference>
<dbReference type="PANTHER" id="PTHR47958">
    <property type="entry name" value="ATP-DEPENDENT RNA HELICASE DBP3"/>
    <property type="match status" value="1"/>
</dbReference>
<dbReference type="Pfam" id="PF00270">
    <property type="entry name" value="DEAD"/>
    <property type="match status" value="1"/>
</dbReference>
<dbReference type="Pfam" id="PF00271">
    <property type="entry name" value="Helicase_C"/>
    <property type="match status" value="1"/>
</dbReference>
<dbReference type="SMART" id="SM00487">
    <property type="entry name" value="DEXDc"/>
    <property type="match status" value="1"/>
</dbReference>
<dbReference type="SMART" id="SM00490">
    <property type="entry name" value="HELICc"/>
    <property type="match status" value="1"/>
</dbReference>
<dbReference type="SUPFAM" id="SSF52540">
    <property type="entry name" value="P-loop containing nucleoside triphosphate hydrolases"/>
    <property type="match status" value="2"/>
</dbReference>
<dbReference type="PROSITE" id="PS51192">
    <property type="entry name" value="HELICASE_ATP_BIND_1"/>
    <property type="match status" value="1"/>
</dbReference>
<dbReference type="PROSITE" id="PS51194">
    <property type="entry name" value="HELICASE_CTER"/>
    <property type="match status" value="1"/>
</dbReference>
<dbReference type="PROSITE" id="PS51195">
    <property type="entry name" value="Q_MOTIF"/>
    <property type="match status" value="1"/>
</dbReference>